<accession>Q54PB8</accession>
<protein>
    <recommendedName>
        <fullName>Putative uncharacterized protein DDB_G0284711</fullName>
    </recommendedName>
</protein>
<proteinExistence type="predicted"/>
<keyword id="KW-1185">Reference proteome</keyword>
<reference key="1">
    <citation type="journal article" date="2005" name="Nature">
        <title>The genome of the social amoeba Dictyostelium discoideum.</title>
        <authorList>
            <person name="Eichinger L."/>
            <person name="Pachebat J.A."/>
            <person name="Gloeckner G."/>
            <person name="Rajandream M.A."/>
            <person name="Sucgang R."/>
            <person name="Berriman M."/>
            <person name="Song J."/>
            <person name="Olsen R."/>
            <person name="Szafranski K."/>
            <person name="Xu Q."/>
            <person name="Tunggal B."/>
            <person name="Kummerfeld S."/>
            <person name="Madera M."/>
            <person name="Konfortov B.A."/>
            <person name="Rivero F."/>
            <person name="Bankier A.T."/>
            <person name="Lehmann R."/>
            <person name="Hamlin N."/>
            <person name="Davies R."/>
            <person name="Gaudet P."/>
            <person name="Fey P."/>
            <person name="Pilcher K."/>
            <person name="Chen G."/>
            <person name="Saunders D."/>
            <person name="Sodergren E.J."/>
            <person name="Davis P."/>
            <person name="Kerhornou A."/>
            <person name="Nie X."/>
            <person name="Hall N."/>
            <person name="Anjard C."/>
            <person name="Hemphill L."/>
            <person name="Bason N."/>
            <person name="Farbrother P."/>
            <person name="Desany B."/>
            <person name="Just E."/>
            <person name="Morio T."/>
            <person name="Rost R."/>
            <person name="Churcher C.M."/>
            <person name="Cooper J."/>
            <person name="Haydock S."/>
            <person name="van Driessche N."/>
            <person name="Cronin A."/>
            <person name="Goodhead I."/>
            <person name="Muzny D.M."/>
            <person name="Mourier T."/>
            <person name="Pain A."/>
            <person name="Lu M."/>
            <person name="Harper D."/>
            <person name="Lindsay R."/>
            <person name="Hauser H."/>
            <person name="James K.D."/>
            <person name="Quiles M."/>
            <person name="Madan Babu M."/>
            <person name="Saito T."/>
            <person name="Buchrieser C."/>
            <person name="Wardroper A."/>
            <person name="Felder M."/>
            <person name="Thangavelu M."/>
            <person name="Johnson D."/>
            <person name="Knights A."/>
            <person name="Loulseged H."/>
            <person name="Mungall K.L."/>
            <person name="Oliver K."/>
            <person name="Price C."/>
            <person name="Quail M.A."/>
            <person name="Urushihara H."/>
            <person name="Hernandez J."/>
            <person name="Rabbinowitsch E."/>
            <person name="Steffen D."/>
            <person name="Sanders M."/>
            <person name="Ma J."/>
            <person name="Kohara Y."/>
            <person name="Sharp S."/>
            <person name="Simmonds M.N."/>
            <person name="Spiegler S."/>
            <person name="Tivey A."/>
            <person name="Sugano S."/>
            <person name="White B."/>
            <person name="Walker D."/>
            <person name="Woodward J.R."/>
            <person name="Winckler T."/>
            <person name="Tanaka Y."/>
            <person name="Shaulsky G."/>
            <person name="Schleicher M."/>
            <person name="Weinstock G.M."/>
            <person name="Rosenthal A."/>
            <person name="Cox E.C."/>
            <person name="Chisholm R.L."/>
            <person name="Gibbs R.A."/>
            <person name="Loomis W.F."/>
            <person name="Platzer M."/>
            <person name="Kay R.R."/>
            <person name="Williams J.G."/>
            <person name="Dear P.H."/>
            <person name="Noegel A.A."/>
            <person name="Barrell B.G."/>
            <person name="Kuspa A."/>
        </authorList>
    </citation>
    <scope>NUCLEOTIDE SEQUENCE [LARGE SCALE GENOMIC DNA]</scope>
    <source>
        <strain>AX4</strain>
    </source>
</reference>
<gene>
    <name type="ORF">DDB_G0284711</name>
</gene>
<sequence>MVLIKINNIDFTLVDKEKLSSIVEGKAIPLIFIRKRGIKLGNLCLLGEFNQEISFFKGKNGKTLLPDMSDLYLMDGFNKQLSRDSFSNNYEKLYYILLVQMFL</sequence>
<feature type="chain" id="PRO_0000350900" description="Putative uncharacterized protein DDB_G0284711">
    <location>
        <begin position="1"/>
        <end position="103"/>
    </location>
</feature>
<dbReference type="EMBL" id="AAFI02000070">
    <property type="protein sequence ID" value="EAL65125.1"/>
    <property type="molecule type" value="Genomic_DNA"/>
</dbReference>
<dbReference type="RefSeq" id="XP_638457.1">
    <property type="nucleotide sequence ID" value="XM_633365.1"/>
</dbReference>
<dbReference type="PaxDb" id="44689-DDB0215781"/>
<dbReference type="EnsemblProtists" id="EAL65125">
    <property type="protein sequence ID" value="EAL65125"/>
    <property type="gene ID" value="DDB_G0284711"/>
</dbReference>
<dbReference type="GeneID" id="8624708"/>
<dbReference type="KEGG" id="ddi:DDB_G0284711"/>
<dbReference type="VEuPathDB" id="AmoebaDB:DDB_G0284711"/>
<dbReference type="HOGENOM" id="CLU_2268889_0_0_1"/>
<dbReference type="InParanoid" id="Q54PB8"/>
<dbReference type="PRO" id="PR:Q54PB8"/>
<dbReference type="Proteomes" id="UP000002195">
    <property type="component" value="Chromosome 4"/>
</dbReference>
<name>Y5781_DICDI</name>
<organism>
    <name type="scientific">Dictyostelium discoideum</name>
    <name type="common">Social amoeba</name>
    <dbReference type="NCBI Taxonomy" id="44689"/>
    <lineage>
        <taxon>Eukaryota</taxon>
        <taxon>Amoebozoa</taxon>
        <taxon>Evosea</taxon>
        <taxon>Eumycetozoa</taxon>
        <taxon>Dictyostelia</taxon>
        <taxon>Dictyosteliales</taxon>
        <taxon>Dictyosteliaceae</taxon>
        <taxon>Dictyostelium</taxon>
    </lineage>
</organism>